<keyword id="KW-1185">Reference proteome</keyword>
<accession>Q54LS0</accession>
<reference key="1">
    <citation type="journal article" date="2005" name="Nature">
        <title>The genome of the social amoeba Dictyostelium discoideum.</title>
        <authorList>
            <person name="Eichinger L."/>
            <person name="Pachebat J.A."/>
            <person name="Gloeckner G."/>
            <person name="Rajandream M.A."/>
            <person name="Sucgang R."/>
            <person name="Berriman M."/>
            <person name="Song J."/>
            <person name="Olsen R."/>
            <person name="Szafranski K."/>
            <person name="Xu Q."/>
            <person name="Tunggal B."/>
            <person name="Kummerfeld S."/>
            <person name="Madera M."/>
            <person name="Konfortov B.A."/>
            <person name="Rivero F."/>
            <person name="Bankier A.T."/>
            <person name="Lehmann R."/>
            <person name="Hamlin N."/>
            <person name="Davies R."/>
            <person name="Gaudet P."/>
            <person name="Fey P."/>
            <person name="Pilcher K."/>
            <person name="Chen G."/>
            <person name="Saunders D."/>
            <person name="Sodergren E.J."/>
            <person name="Davis P."/>
            <person name="Kerhornou A."/>
            <person name="Nie X."/>
            <person name="Hall N."/>
            <person name="Anjard C."/>
            <person name="Hemphill L."/>
            <person name="Bason N."/>
            <person name="Farbrother P."/>
            <person name="Desany B."/>
            <person name="Just E."/>
            <person name="Morio T."/>
            <person name="Rost R."/>
            <person name="Churcher C.M."/>
            <person name="Cooper J."/>
            <person name="Haydock S."/>
            <person name="van Driessche N."/>
            <person name="Cronin A."/>
            <person name="Goodhead I."/>
            <person name="Muzny D.M."/>
            <person name="Mourier T."/>
            <person name="Pain A."/>
            <person name="Lu M."/>
            <person name="Harper D."/>
            <person name="Lindsay R."/>
            <person name="Hauser H."/>
            <person name="James K.D."/>
            <person name="Quiles M."/>
            <person name="Madan Babu M."/>
            <person name="Saito T."/>
            <person name="Buchrieser C."/>
            <person name="Wardroper A."/>
            <person name="Felder M."/>
            <person name="Thangavelu M."/>
            <person name="Johnson D."/>
            <person name="Knights A."/>
            <person name="Loulseged H."/>
            <person name="Mungall K.L."/>
            <person name="Oliver K."/>
            <person name="Price C."/>
            <person name="Quail M.A."/>
            <person name="Urushihara H."/>
            <person name="Hernandez J."/>
            <person name="Rabbinowitsch E."/>
            <person name="Steffen D."/>
            <person name="Sanders M."/>
            <person name="Ma J."/>
            <person name="Kohara Y."/>
            <person name="Sharp S."/>
            <person name="Simmonds M.N."/>
            <person name="Spiegler S."/>
            <person name="Tivey A."/>
            <person name="Sugano S."/>
            <person name="White B."/>
            <person name="Walker D."/>
            <person name="Woodward J.R."/>
            <person name="Winckler T."/>
            <person name="Tanaka Y."/>
            <person name="Shaulsky G."/>
            <person name="Schleicher M."/>
            <person name="Weinstock G.M."/>
            <person name="Rosenthal A."/>
            <person name="Cox E.C."/>
            <person name="Chisholm R.L."/>
            <person name="Gibbs R.A."/>
            <person name="Loomis W.F."/>
            <person name="Platzer M."/>
            <person name="Kay R.R."/>
            <person name="Williams J.G."/>
            <person name="Dear P.H."/>
            <person name="Noegel A.A."/>
            <person name="Barrell B.G."/>
            <person name="Kuspa A."/>
        </authorList>
    </citation>
    <scope>NUCLEOTIDE SEQUENCE [LARGE SCALE GENOMIC DNA]</scope>
    <source>
        <strain>AX4</strain>
    </source>
</reference>
<organism>
    <name type="scientific">Dictyostelium discoideum</name>
    <name type="common">Social amoeba</name>
    <dbReference type="NCBI Taxonomy" id="44689"/>
    <lineage>
        <taxon>Eukaryota</taxon>
        <taxon>Amoebozoa</taxon>
        <taxon>Evosea</taxon>
        <taxon>Eumycetozoa</taxon>
        <taxon>Dictyostelia</taxon>
        <taxon>Dictyosteliales</taxon>
        <taxon>Dictyosteliaceae</taxon>
        <taxon>Dictyostelium</taxon>
    </lineage>
</organism>
<sequence length="54" mass="6126">MLIKSIISLNLISSSNNSNISKDDKLKIISYDLNKNSNTSPKYVCIFTRPLYNC</sequence>
<name>Y8817_DICDI</name>
<proteinExistence type="predicted"/>
<feature type="chain" id="PRO_0000348531" description="Putative uncharacterized protein DDB_G0286477">
    <location>
        <begin position="1"/>
        <end position="54"/>
    </location>
</feature>
<protein>
    <recommendedName>
        <fullName>Putative uncharacterized protein DDB_G0286477</fullName>
    </recommendedName>
</protein>
<gene>
    <name type="ORF">DDB_G0286477</name>
</gene>
<dbReference type="EMBL" id="AAFI02000085">
    <property type="protein sequence ID" value="EAL64263.1"/>
    <property type="molecule type" value="Genomic_DNA"/>
</dbReference>
<dbReference type="RefSeq" id="XP_637760.1">
    <property type="nucleotide sequence ID" value="XM_632668.1"/>
</dbReference>
<dbReference type="PaxDb" id="44689-DDB0218817"/>
<dbReference type="EnsemblProtists" id="EAL64263">
    <property type="protein sequence ID" value="EAL64263"/>
    <property type="gene ID" value="DDB_G0286477"/>
</dbReference>
<dbReference type="GeneID" id="8625626"/>
<dbReference type="KEGG" id="ddi:DDB_G0286477"/>
<dbReference type="dictyBase" id="DDB_G0286477"/>
<dbReference type="HOGENOM" id="CLU_3054364_0_0_1"/>
<dbReference type="InParanoid" id="Q54LS0"/>
<dbReference type="PRO" id="PR:Q54LS0"/>
<dbReference type="Proteomes" id="UP000002195">
    <property type="component" value="Chromosome 4"/>
</dbReference>